<accession>P63410</accession>
<accession>A0A1R3XV91</accession>
<accession>P96255</accession>
<accession>X2BEY2</accession>
<evidence type="ECO:0000255" key="1">
    <source>
        <dbReference type="HAMAP-Rule" id="MF_00020"/>
    </source>
</evidence>
<proteinExistence type="inferred from homology"/>
<dbReference type="EC" id="2.7.2.1" evidence="1"/>
<dbReference type="EMBL" id="LT708304">
    <property type="protein sequence ID" value="SIT98992.1"/>
    <property type="molecule type" value="Genomic_DNA"/>
</dbReference>
<dbReference type="RefSeq" id="NP_854080.1">
    <property type="nucleotide sequence ID" value="NC_002945.3"/>
</dbReference>
<dbReference type="RefSeq" id="WP_003402097.1">
    <property type="nucleotide sequence ID" value="NC_002945.4"/>
</dbReference>
<dbReference type="SMR" id="P63410"/>
<dbReference type="PATRIC" id="fig|233413.5.peg.455"/>
<dbReference type="UniPathway" id="UPA00340">
    <property type="reaction ID" value="UER00458"/>
</dbReference>
<dbReference type="Proteomes" id="UP000001419">
    <property type="component" value="Chromosome"/>
</dbReference>
<dbReference type="GO" id="GO:0005737">
    <property type="term" value="C:cytoplasm"/>
    <property type="evidence" value="ECO:0007669"/>
    <property type="project" value="UniProtKB-SubCell"/>
</dbReference>
<dbReference type="GO" id="GO:0008776">
    <property type="term" value="F:acetate kinase activity"/>
    <property type="evidence" value="ECO:0007669"/>
    <property type="project" value="UniProtKB-UniRule"/>
</dbReference>
<dbReference type="GO" id="GO:0005524">
    <property type="term" value="F:ATP binding"/>
    <property type="evidence" value="ECO:0007669"/>
    <property type="project" value="UniProtKB-KW"/>
</dbReference>
<dbReference type="GO" id="GO:0000287">
    <property type="term" value="F:magnesium ion binding"/>
    <property type="evidence" value="ECO:0007669"/>
    <property type="project" value="UniProtKB-UniRule"/>
</dbReference>
<dbReference type="GO" id="GO:0006083">
    <property type="term" value="P:acetate metabolic process"/>
    <property type="evidence" value="ECO:0007669"/>
    <property type="project" value="TreeGrafter"/>
</dbReference>
<dbReference type="GO" id="GO:0006085">
    <property type="term" value="P:acetyl-CoA biosynthetic process"/>
    <property type="evidence" value="ECO:0007669"/>
    <property type="project" value="UniProtKB-UniRule"/>
</dbReference>
<dbReference type="CDD" id="cd24010">
    <property type="entry name" value="ASKHA_NBD_AcK_PK"/>
    <property type="match status" value="1"/>
</dbReference>
<dbReference type="Gene3D" id="3.30.420.40">
    <property type="match status" value="2"/>
</dbReference>
<dbReference type="HAMAP" id="MF_00020">
    <property type="entry name" value="Acetate_kinase"/>
    <property type="match status" value="1"/>
</dbReference>
<dbReference type="InterPro" id="IPR004372">
    <property type="entry name" value="Ac/propionate_kinase"/>
</dbReference>
<dbReference type="InterPro" id="IPR000890">
    <property type="entry name" value="Aliphatic_acid_kin_short-chain"/>
</dbReference>
<dbReference type="InterPro" id="IPR023865">
    <property type="entry name" value="Aliphatic_acid_kinase_CS"/>
</dbReference>
<dbReference type="InterPro" id="IPR043129">
    <property type="entry name" value="ATPase_NBD"/>
</dbReference>
<dbReference type="NCBIfam" id="TIGR00016">
    <property type="entry name" value="ackA"/>
    <property type="match status" value="1"/>
</dbReference>
<dbReference type="PANTHER" id="PTHR21060">
    <property type="entry name" value="ACETATE KINASE"/>
    <property type="match status" value="1"/>
</dbReference>
<dbReference type="PANTHER" id="PTHR21060:SF15">
    <property type="entry name" value="ACETATE KINASE-RELATED"/>
    <property type="match status" value="1"/>
</dbReference>
<dbReference type="Pfam" id="PF00871">
    <property type="entry name" value="Acetate_kinase"/>
    <property type="match status" value="1"/>
</dbReference>
<dbReference type="PIRSF" id="PIRSF000722">
    <property type="entry name" value="Acetate_prop_kin"/>
    <property type="match status" value="1"/>
</dbReference>
<dbReference type="PRINTS" id="PR00471">
    <property type="entry name" value="ACETATEKNASE"/>
</dbReference>
<dbReference type="SUPFAM" id="SSF53067">
    <property type="entry name" value="Actin-like ATPase domain"/>
    <property type="match status" value="2"/>
</dbReference>
<dbReference type="PROSITE" id="PS01075">
    <property type="entry name" value="ACETATE_KINASE_1"/>
    <property type="match status" value="1"/>
</dbReference>
<dbReference type="PROSITE" id="PS01076">
    <property type="entry name" value="ACETATE_KINASE_2"/>
    <property type="match status" value="1"/>
</dbReference>
<gene>
    <name evidence="1" type="primary">ackA</name>
    <name type="ordered locus">BQ2027_MB0417</name>
</gene>
<protein>
    <recommendedName>
        <fullName evidence="1">Acetate kinase</fullName>
        <ecNumber evidence="1">2.7.2.1</ecNumber>
    </recommendedName>
    <alternativeName>
        <fullName evidence="1">Acetokinase</fullName>
    </alternativeName>
</protein>
<reference key="1">
    <citation type="journal article" date="2003" name="Proc. Natl. Acad. Sci. U.S.A.">
        <title>The complete genome sequence of Mycobacterium bovis.</title>
        <authorList>
            <person name="Garnier T."/>
            <person name="Eiglmeier K."/>
            <person name="Camus J.-C."/>
            <person name="Medina N."/>
            <person name="Mansoor H."/>
            <person name="Pryor M."/>
            <person name="Duthoy S."/>
            <person name="Grondin S."/>
            <person name="Lacroix C."/>
            <person name="Monsempe C."/>
            <person name="Simon S."/>
            <person name="Harris B."/>
            <person name="Atkin R."/>
            <person name="Doggett J."/>
            <person name="Mayes R."/>
            <person name="Keating L."/>
            <person name="Wheeler P.R."/>
            <person name="Parkhill J."/>
            <person name="Barrell B.G."/>
            <person name="Cole S.T."/>
            <person name="Gordon S.V."/>
            <person name="Hewinson R.G."/>
        </authorList>
    </citation>
    <scope>NUCLEOTIDE SEQUENCE [LARGE SCALE GENOMIC DNA]</scope>
    <source>
        <strain>ATCC BAA-935 / AF2122/97</strain>
    </source>
</reference>
<reference key="2">
    <citation type="journal article" date="2017" name="Genome Announc.">
        <title>Updated reference genome sequence and annotation of Mycobacterium bovis AF2122/97.</title>
        <authorList>
            <person name="Malone K.M."/>
            <person name="Farrell D."/>
            <person name="Stuber T.P."/>
            <person name="Schubert O.T."/>
            <person name="Aebersold R."/>
            <person name="Robbe-Austerman S."/>
            <person name="Gordon S.V."/>
        </authorList>
    </citation>
    <scope>NUCLEOTIDE SEQUENCE [LARGE SCALE GENOMIC DNA]</scope>
    <scope>GENOME REANNOTATION</scope>
    <source>
        <strain>ATCC BAA-935 / AF2122/97</strain>
    </source>
</reference>
<feature type="chain" id="PRO_0000107583" description="Acetate kinase">
    <location>
        <begin position="1"/>
        <end position="385"/>
    </location>
</feature>
<feature type="active site" description="Proton donor/acceptor" evidence="1">
    <location>
        <position position="132"/>
    </location>
</feature>
<feature type="binding site" evidence="1">
    <location>
        <position position="9"/>
    </location>
    <ligand>
        <name>Mg(2+)</name>
        <dbReference type="ChEBI" id="CHEBI:18420"/>
    </ligand>
</feature>
<feature type="binding site" evidence="1">
    <location>
        <position position="16"/>
    </location>
    <ligand>
        <name>ATP</name>
        <dbReference type="ChEBI" id="CHEBI:30616"/>
    </ligand>
</feature>
<feature type="binding site" evidence="1">
    <location>
        <position position="75"/>
    </location>
    <ligand>
        <name>substrate</name>
    </ligand>
</feature>
<feature type="binding site" evidence="1">
    <location>
        <begin position="192"/>
        <end position="196"/>
    </location>
    <ligand>
        <name>ATP</name>
        <dbReference type="ChEBI" id="CHEBI:30616"/>
    </ligand>
</feature>
<feature type="binding site" evidence="1">
    <location>
        <begin position="266"/>
        <end position="268"/>
    </location>
    <ligand>
        <name>ATP</name>
        <dbReference type="ChEBI" id="CHEBI:30616"/>
    </ligand>
</feature>
<feature type="binding site" evidence="1">
    <location>
        <begin position="314"/>
        <end position="318"/>
    </location>
    <ligand>
        <name>ATP</name>
        <dbReference type="ChEBI" id="CHEBI:30616"/>
    </ligand>
</feature>
<feature type="binding site" evidence="1">
    <location>
        <position position="368"/>
    </location>
    <ligand>
        <name>Mg(2+)</name>
        <dbReference type="ChEBI" id="CHEBI:18420"/>
    </ligand>
</feature>
<feature type="site" description="Transition state stabilizer" evidence="1">
    <location>
        <position position="164"/>
    </location>
</feature>
<feature type="site" description="Transition state stabilizer" evidence="1">
    <location>
        <position position="225"/>
    </location>
</feature>
<name>ACKA_MYCBO</name>
<keyword id="KW-0067">ATP-binding</keyword>
<keyword id="KW-0963">Cytoplasm</keyword>
<keyword id="KW-0418">Kinase</keyword>
<keyword id="KW-0460">Magnesium</keyword>
<keyword id="KW-0479">Metal-binding</keyword>
<keyword id="KW-0547">Nucleotide-binding</keyword>
<keyword id="KW-1185">Reference proteome</keyword>
<keyword id="KW-0808">Transferase</keyword>
<comment type="function">
    <text evidence="1">Catalyzes the formation of acetyl phosphate from acetate and ATP. Can also catalyze the reverse reaction.</text>
</comment>
<comment type="catalytic activity">
    <reaction evidence="1">
        <text>acetate + ATP = acetyl phosphate + ADP</text>
        <dbReference type="Rhea" id="RHEA:11352"/>
        <dbReference type="ChEBI" id="CHEBI:22191"/>
        <dbReference type="ChEBI" id="CHEBI:30089"/>
        <dbReference type="ChEBI" id="CHEBI:30616"/>
        <dbReference type="ChEBI" id="CHEBI:456216"/>
        <dbReference type="EC" id="2.7.2.1"/>
    </reaction>
</comment>
<comment type="cofactor">
    <cofactor evidence="1">
        <name>Mg(2+)</name>
        <dbReference type="ChEBI" id="CHEBI:18420"/>
    </cofactor>
    <cofactor evidence="1">
        <name>Mn(2+)</name>
        <dbReference type="ChEBI" id="CHEBI:29035"/>
    </cofactor>
    <text evidence="1">Mg(2+). Can also accept Mn(2+).</text>
</comment>
<comment type="pathway">
    <text evidence="1">Metabolic intermediate biosynthesis; acetyl-CoA biosynthesis; acetyl-CoA from acetate: step 1/2.</text>
</comment>
<comment type="subunit">
    <text evidence="1">Homodimer.</text>
</comment>
<comment type="subcellular location">
    <subcellularLocation>
        <location evidence="1">Cytoplasm</location>
    </subcellularLocation>
</comment>
<comment type="similarity">
    <text evidence="1">Belongs to the acetokinase family.</text>
</comment>
<organism>
    <name type="scientific">Mycobacterium bovis (strain ATCC BAA-935 / AF2122/97)</name>
    <dbReference type="NCBI Taxonomy" id="233413"/>
    <lineage>
        <taxon>Bacteria</taxon>
        <taxon>Bacillati</taxon>
        <taxon>Actinomycetota</taxon>
        <taxon>Actinomycetes</taxon>
        <taxon>Mycobacteriales</taxon>
        <taxon>Mycobacteriaceae</taxon>
        <taxon>Mycobacterium</taxon>
        <taxon>Mycobacterium tuberculosis complex</taxon>
    </lineage>
</organism>
<sequence>MSSTVLVINSGSSSLKFQLVEPVAGMSRAAGIVERIGERSSPVADHAQALHRAFKMLAEDGIDLQTCGLVAVGHRVVHGGTEFHQPTLLDDTVIGKLEELSALAPLHNPPAVLGIKVARRLLANVAHVAVFDTAFFHDLPPAAATYAIDRDVADRWHIRRYGFHGTSHQYVSERAAAFLGRPLDGLNQIVLHLGNGASASAIARGRPVETSMGLTPLEGLVMGTRSGDLDPGVISYLWRTARMGVEDIESMLNHRSGMLGLAGERDFRRLRLVIETGDRSAQLAYEVFIHRLRKYLGAYLAVLGHTDVVSFTAGIGENDAAVRRDALAGLQGLGIALDQDRNLGPGHGARRISSDDSPIAVLVVPTNEELAIARDCLRVLGGRRA</sequence>